<dbReference type="EC" id="2.7.6.5" evidence="4"/>
<dbReference type="EMBL" id="AB298325">
    <property type="protein sequence ID" value="BAF76773.1"/>
    <property type="molecule type" value="mRNA"/>
</dbReference>
<dbReference type="EMBL" id="AC124144">
    <property type="protein sequence ID" value="AAT07650.1"/>
    <property type="molecule type" value="Genomic_DNA"/>
</dbReference>
<dbReference type="EMBL" id="AP008211">
    <property type="protein sequence ID" value="BAH92957.1"/>
    <property type="molecule type" value="Genomic_DNA"/>
</dbReference>
<dbReference type="EMBL" id="AP014961">
    <property type="protein sequence ID" value="BAS92409.1"/>
    <property type="molecule type" value="Genomic_DNA"/>
</dbReference>
<dbReference type="RefSeq" id="XP_015638151.1">
    <property type="nucleotide sequence ID" value="XM_015782665.1"/>
</dbReference>
<dbReference type="SMR" id="Q75IS2"/>
<dbReference type="STRING" id="39947.Q75IS2"/>
<dbReference type="PaxDb" id="39947-Q75IS2"/>
<dbReference type="EnsemblPlants" id="Os05t0161800-01">
    <property type="protein sequence ID" value="Os05t0161800-01"/>
    <property type="gene ID" value="Os05g0161800"/>
</dbReference>
<dbReference type="Gramene" id="Os05t0161800-01">
    <property type="protein sequence ID" value="Os05t0161800-01"/>
    <property type="gene ID" value="Os05g0161800"/>
</dbReference>
<dbReference type="KEGG" id="dosa:Os05g0161800"/>
<dbReference type="eggNOG" id="KOG1157">
    <property type="taxonomic scope" value="Eukaryota"/>
</dbReference>
<dbReference type="HOGENOM" id="CLU_022292_1_0_1"/>
<dbReference type="InParanoid" id="Q75IS2"/>
<dbReference type="OMA" id="DDELRCT"/>
<dbReference type="OrthoDB" id="427950at2759"/>
<dbReference type="Proteomes" id="UP000000763">
    <property type="component" value="Chromosome 5"/>
</dbReference>
<dbReference type="Proteomes" id="UP000059680">
    <property type="component" value="Chromosome 5"/>
</dbReference>
<dbReference type="GO" id="GO:0009507">
    <property type="term" value="C:chloroplast"/>
    <property type="evidence" value="ECO:0000318"/>
    <property type="project" value="GO_Central"/>
</dbReference>
<dbReference type="GO" id="GO:0005524">
    <property type="term" value="F:ATP binding"/>
    <property type="evidence" value="ECO:0007669"/>
    <property type="project" value="UniProtKB-KW"/>
</dbReference>
<dbReference type="GO" id="GO:0005509">
    <property type="term" value="F:calcium ion binding"/>
    <property type="evidence" value="ECO:0007669"/>
    <property type="project" value="InterPro"/>
</dbReference>
<dbReference type="GO" id="GO:0005525">
    <property type="term" value="F:GTP binding"/>
    <property type="evidence" value="ECO:0007669"/>
    <property type="project" value="UniProtKB-KW"/>
</dbReference>
<dbReference type="GO" id="GO:0008728">
    <property type="term" value="F:GTP diphosphokinase activity"/>
    <property type="evidence" value="ECO:0000314"/>
    <property type="project" value="UniProtKB"/>
</dbReference>
<dbReference type="GO" id="GO:0016301">
    <property type="term" value="F:kinase activity"/>
    <property type="evidence" value="ECO:0007669"/>
    <property type="project" value="UniProtKB-KW"/>
</dbReference>
<dbReference type="GO" id="GO:0015969">
    <property type="term" value="P:guanosine tetraphosphate metabolic process"/>
    <property type="evidence" value="ECO:0007669"/>
    <property type="project" value="InterPro"/>
</dbReference>
<dbReference type="CDD" id="cd00051">
    <property type="entry name" value="EFh"/>
    <property type="match status" value="1"/>
</dbReference>
<dbReference type="CDD" id="cd05399">
    <property type="entry name" value="NT_Rel-Spo_like"/>
    <property type="match status" value="1"/>
</dbReference>
<dbReference type="FunFam" id="1.10.238.10:FF:000287">
    <property type="entry name" value="Probable GTP diphosphokinase CRSH, chloroplastic"/>
    <property type="match status" value="1"/>
</dbReference>
<dbReference type="FunFam" id="1.10.3210.10:FF:000019">
    <property type="entry name" value="Probable GTP diphosphokinase CRSH, chloroplastic"/>
    <property type="match status" value="1"/>
</dbReference>
<dbReference type="FunFam" id="3.30.460.10:FF:000025">
    <property type="entry name" value="probable GTP diphosphokinase CRSH, chloroplastic"/>
    <property type="match status" value="1"/>
</dbReference>
<dbReference type="Gene3D" id="3.30.460.10">
    <property type="entry name" value="Beta Polymerase, domain 2"/>
    <property type="match status" value="1"/>
</dbReference>
<dbReference type="Gene3D" id="1.10.238.10">
    <property type="entry name" value="EF-hand"/>
    <property type="match status" value="1"/>
</dbReference>
<dbReference type="Gene3D" id="1.10.3210.10">
    <property type="entry name" value="Hypothetical protein af1432"/>
    <property type="match status" value="1"/>
</dbReference>
<dbReference type="InterPro" id="IPR011992">
    <property type="entry name" value="EF-hand-dom_pair"/>
</dbReference>
<dbReference type="InterPro" id="IPR018247">
    <property type="entry name" value="EF_Hand_1_Ca_BS"/>
</dbReference>
<dbReference type="InterPro" id="IPR002048">
    <property type="entry name" value="EF_hand_dom"/>
</dbReference>
<dbReference type="InterPro" id="IPR006674">
    <property type="entry name" value="HD_domain"/>
</dbReference>
<dbReference type="InterPro" id="IPR043519">
    <property type="entry name" value="NT_sf"/>
</dbReference>
<dbReference type="InterPro" id="IPR007685">
    <property type="entry name" value="RelA_SpoT"/>
</dbReference>
<dbReference type="PANTHER" id="PTHR21262:SF12">
    <property type="entry name" value="GTP DIPHOSPHOKINASE CRSH, CHLOROPLASTIC-RELATED"/>
    <property type="match status" value="1"/>
</dbReference>
<dbReference type="PANTHER" id="PTHR21262">
    <property type="entry name" value="GUANOSINE-3',5'-BIS DIPHOSPHATE 3'-PYROPHOSPHOHYDROLASE"/>
    <property type="match status" value="1"/>
</dbReference>
<dbReference type="Pfam" id="PF13499">
    <property type="entry name" value="EF-hand_7"/>
    <property type="match status" value="1"/>
</dbReference>
<dbReference type="Pfam" id="PF13328">
    <property type="entry name" value="HD_4"/>
    <property type="match status" value="1"/>
</dbReference>
<dbReference type="Pfam" id="PF04607">
    <property type="entry name" value="RelA_SpoT"/>
    <property type="match status" value="1"/>
</dbReference>
<dbReference type="SMART" id="SM00054">
    <property type="entry name" value="EFh"/>
    <property type="match status" value="2"/>
</dbReference>
<dbReference type="SMART" id="SM00954">
    <property type="entry name" value="RelA_SpoT"/>
    <property type="match status" value="1"/>
</dbReference>
<dbReference type="SUPFAM" id="SSF47473">
    <property type="entry name" value="EF-hand"/>
    <property type="match status" value="1"/>
</dbReference>
<dbReference type="SUPFAM" id="SSF109604">
    <property type="entry name" value="HD-domain/PDEase-like"/>
    <property type="match status" value="1"/>
</dbReference>
<dbReference type="SUPFAM" id="SSF81301">
    <property type="entry name" value="Nucleotidyltransferase"/>
    <property type="match status" value="1"/>
</dbReference>
<dbReference type="PROSITE" id="PS00018">
    <property type="entry name" value="EF_HAND_1"/>
    <property type="match status" value="2"/>
</dbReference>
<dbReference type="PROSITE" id="PS50222">
    <property type="entry name" value="EF_HAND_2"/>
    <property type="match status" value="2"/>
</dbReference>
<dbReference type="PROSITE" id="PS51831">
    <property type="entry name" value="HD"/>
    <property type="match status" value="1"/>
</dbReference>
<proteinExistence type="evidence at protein level"/>
<evidence type="ECO:0000255" key="1"/>
<evidence type="ECO:0000255" key="2">
    <source>
        <dbReference type="PROSITE-ProRule" id="PRU00448"/>
    </source>
</evidence>
<evidence type="ECO:0000255" key="3">
    <source>
        <dbReference type="PROSITE-ProRule" id="PRU01175"/>
    </source>
</evidence>
<evidence type="ECO:0000269" key="4">
    <source>
    </source>
</evidence>
<evidence type="ECO:0000303" key="5">
    <source>
    </source>
</evidence>
<evidence type="ECO:0000305" key="6"/>
<evidence type="ECO:0000305" key="7">
    <source>
    </source>
</evidence>
<evidence type="ECO:0000312" key="8">
    <source>
        <dbReference type="EMBL" id="AAT07650.1"/>
    </source>
</evidence>
<evidence type="ECO:0000312" key="9">
    <source>
        <dbReference type="EMBL" id="BAS92409.1"/>
    </source>
</evidence>
<organism>
    <name type="scientific">Oryza sativa subsp. japonica</name>
    <name type="common">Rice</name>
    <dbReference type="NCBI Taxonomy" id="39947"/>
    <lineage>
        <taxon>Eukaryota</taxon>
        <taxon>Viridiplantae</taxon>
        <taxon>Streptophyta</taxon>
        <taxon>Embryophyta</taxon>
        <taxon>Tracheophyta</taxon>
        <taxon>Spermatophyta</taxon>
        <taxon>Magnoliopsida</taxon>
        <taxon>Liliopsida</taxon>
        <taxon>Poales</taxon>
        <taxon>Poaceae</taxon>
        <taxon>BOP clade</taxon>
        <taxon>Oryzoideae</taxon>
        <taxon>Oryzeae</taxon>
        <taxon>Oryzinae</taxon>
        <taxon>Oryza</taxon>
        <taxon>Oryza sativa</taxon>
    </lineage>
</organism>
<feature type="transit peptide" description="Chloroplast" evidence="1">
    <location>
        <begin position="1"/>
        <end position="45"/>
    </location>
</feature>
<feature type="chain" id="PRO_0000429856" description="GTP diphosphokinase CRSH3, chloroplastic">
    <location>
        <begin position="46"/>
        <end position="578"/>
    </location>
</feature>
<feature type="domain" description="HD" evidence="3">
    <location>
        <begin position="99"/>
        <end position="199"/>
    </location>
</feature>
<feature type="domain" description="EF-hand 1" evidence="2">
    <location>
        <begin position="468"/>
        <end position="503"/>
    </location>
</feature>
<feature type="domain" description="EF-hand 2" evidence="2">
    <location>
        <begin position="506"/>
        <end position="537"/>
    </location>
</feature>
<feature type="binding site" evidence="2">
    <location>
        <position position="481"/>
    </location>
    <ligand>
        <name>Ca(2+)</name>
        <dbReference type="ChEBI" id="CHEBI:29108"/>
        <label>1</label>
    </ligand>
</feature>
<feature type="binding site" evidence="2">
    <location>
        <position position="483"/>
    </location>
    <ligand>
        <name>Ca(2+)</name>
        <dbReference type="ChEBI" id="CHEBI:29108"/>
        <label>1</label>
    </ligand>
</feature>
<feature type="binding site" evidence="2">
    <location>
        <position position="485"/>
    </location>
    <ligand>
        <name>Ca(2+)</name>
        <dbReference type="ChEBI" id="CHEBI:29108"/>
        <label>1</label>
    </ligand>
</feature>
<feature type="binding site" evidence="2">
    <location>
        <position position="487"/>
    </location>
    <ligand>
        <name>Ca(2+)</name>
        <dbReference type="ChEBI" id="CHEBI:29108"/>
        <label>1</label>
    </ligand>
</feature>
<feature type="binding site" evidence="2">
    <location>
        <position position="492"/>
    </location>
    <ligand>
        <name>Ca(2+)</name>
        <dbReference type="ChEBI" id="CHEBI:29108"/>
        <label>1</label>
    </ligand>
</feature>
<feature type="binding site" evidence="2">
    <location>
        <position position="515"/>
    </location>
    <ligand>
        <name>Ca(2+)</name>
        <dbReference type="ChEBI" id="CHEBI:29108"/>
        <label>2</label>
    </ligand>
</feature>
<feature type="binding site" evidence="2">
    <location>
        <position position="517"/>
    </location>
    <ligand>
        <name>Ca(2+)</name>
        <dbReference type="ChEBI" id="CHEBI:29108"/>
        <label>2</label>
    </ligand>
</feature>
<feature type="binding site" evidence="2">
    <location>
        <position position="519"/>
    </location>
    <ligand>
        <name>Ca(2+)</name>
        <dbReference type="ChEBI" id="CHEBI:29108"/>
        <label>2</label>
    </ligand>
</feature>
<feature type="binding site" evidence="2">
    <location>
        <position position="521"/>
    </location>
    <ligand>
        <name>Ca(2+)</name>
        <dbReference type="ChEBI" id="CHEBI:29108"/>
        <label>2</label>
    </ligand>
</feature>
<feature type="binding site" evidence="2">
    <location>
        <position position="526"/>
    </location>
    <ligand>
        <name>Ca(2+)</name>
        <dbReference type="ChEBI" id="CHEBI:29108"/>
        <label>2</label>
    </ligand>
</feature>
<feature type="sequence conflict" description="In Ref. 1; BAF76773." evidence="6" ref="1">
    <location>
        <position position="333"/>
    </location>
</feature>
<protein>
    <recommendedName>
        <fullName evidence="6">GTP diphosphokinase CRSH3, chloroplastic</fullName>
        <ecNumber evidence="4">2.7.6.5</ecNumber>
    </recommendedName>
    <alternativeName>
        <fullName evidence="5">Calcium-activated RelA/Spot homolog 3</fullName>
        <shortName evidence="5">OsCRSH3</shortName>
    </alternativeName>
    <alternativeName>
        <fullName evidence="5">ppGpp synthetase CRSH3</fullName>
    </alternativeName>
</protein>
<comment type="function">
    <text evidence="4">Possesses calcium-dependent ppGpp (guanosine 3'-diphosphate 5'-diphosphate) synthetase activity in vitro and is able to functionally complement E.coli relA mutants. May be involved in a rapid plant ppGpp-mediated response to pathogens and other stresses.</text>
</comment>
<comment type="catalytic activity">
    <reaction evidence="4">
        <text>GTP + ATP = guanosine 3'-diphosphate 5'-triphosphate + AMP</text>
        <dbReference type="Rhea" id="RHEA:22088"/>
        <dbReference type="ChEBI" id="CHEBI:30616"/>
        <dbReference type="ChEBI" id="CHEBI:37565"/>
        <dbReference type="ChEBI" id="CHEBI:142410"/>
        <dbReference type="ChEBI" id="CHEBI:456215"/>
        <dbReference type="EC" id="2.7.6.5"/>
    </reaction>
    <physiologicalReaction direction="right-to-left" evidence="4">
        <dbReference type="Rhea" id="RHEA:22090"/>
    </physiologicalReaction>
</comment>
<comment type="activity regulation">
    <text evidence="4">Activated by calcium.</text>
</comment>
<comment type="subcellular location">
    <subcellularLocation>
        <location evidence="1">Plastid</location>
        <location evidence="1">Chloroplast</location>
    </subcellularLocation>
</comment>
<comment type="tissue specificity">
    <text evidence="4">Expressed in roots and shoots.</text>
</comment>
<comment type="domain">
    <text evidence="7">The calcium-binding sites of the 2 EF-hand domains are required for enzyme activity.</text>
</comment>
<comment type="similarity">
    <text evidence="6">Belongs to the RelA/SpoT family.</text>
</comment>
<gene>
    <name evidence="5" type="primary">CRSH3</name>
    <name evidence="9" type="ordered locus">Os05g0161800</name>
    <name evidence="6" type="ordered locus">LOC_Os05g06940</name>
    <name evidence="8" type="ORF">OSJNBb0099P06.1</name>
</gene>
<sequence length="578" mass="61843">MANAGVNETVAVAVAIDAPGVGHDHGAAGEVRRPSTRRLAPAGSGGRLMAELLGVFNGLTERMGEDVATSSSSRLLFRALKLALPALRDGGGDGGGGQSVSRALVVAASLADLQMDAEVISAGMVRGALDTGALAMADVEAQLGASAAGLVEESLKVKRAPSEVDVADEEAASALRKRCLSSYDIRAVILELAVKLDAMKHLDVLPKHQQRTTSLEVLKVFALLAHAVGAGELSLELEDLSFQRLYPQAYAHIDQWLSSQEDDCKRVIAASKEELLRALTADDELRCTVTGVDVMGRYKSRFSTMKKLVKDGRRPEDVNDILGMRVILDPRPGGGGGGDGDGGDRACLRTHEVIKAMWKDVPARTKDYITRPKGNGYRSLHVAVDMSEPGPEGKKRPLMEIQVRTREMDMAAVGGQASHALYKGGLTDPEEAKRLKAIMLAAAEVAAQHLRDEPAGDGGQTTAAASAATAGNVERAFQLLDKNGDGRISMEELTEIMEDLGAGGHDAEELMRLLDANSDGSLSSDEFALFQKRVKLKTKLENKDDEYKEILKQKLQKVDDTGLIHVYRKNLSDKLVLV</sequence>
<accession>Q75IS2</accession>
<accession>A0A0N7KK72</accession>
<accession>A7VL54</accession>
<reference key="1">
    <citation type="journal article" date="2007" name="J. Biol. Chem.">
        <title>Calcium-activated (p)ppGpp synthetase in chloroplasts of land plants.</title>
        <authorList>
            <person name="Tozawa Y."/>
            <person name="Nozawa A."/>
            <person name="Kanno T."/>
            <person name="Narisawa T."/>
            <person name="Masuda S."/>
            <person name="Kasai K."/>
            <person name="Nanamiya H."/>
        </authorList>
    </citation>
    <scope>NUCLEOTIDE SEQUENCE [MRNA]</scope>
    <scope>FUNCTION</scope>
    <scope>CATALYTIC ACTIVITY</scope>
    <scope>ACTIVITY REGULATION</scope>
    <scope>DOMAIN</scope>
    <scope>TISSUE SPECIFICITY</scope>
    <source>
        <strain>cv. Nipponbare</strain>
    </source>
</reference>
<reference key="2">
    <citation type="journal article" date="2005" name="Mol. Genet. Genomics">
        <title>A fine physical map of the rice chromosome 5.</title>
        <authorList>
            <person name="Cheng C.-H."/>
            <person name="Chung M.C."/>
            <person name="Liu S.-M."/>
            <person name="Chen S.-K."/>
            <person name="Kao F.Y."/>
            <person name="Lin S.-J."/>
            <person name="Hsiao S.-H."/>
            <person name="Tseng I.C."/>
            <person name="Hsing Y.-I.C."/>
            <person name="Wu H.-P."/>
            <person name="Chen C.-S."/>
            <person name="Shaw J.-F."/>
            <person name="Wu J."/>
            <person name="Matsumoto T."/>
            <person name="Sasaki T."/>
            <person name="Chen H.-C."/>
            <person name="Chow T.-Y."/>
        </authorList>
    </citation>
    <scope>NUCLEOTIDE SEQUENCE [LARGE SCALE GENOMIC DNA]</scope>
    <source>
        <strain>cv. Nipponbare</strain>
    </source>
</reference>
<reference key="3">
    <citation type="journal article" date="2005" name="Nature">
        <title>The map-based sequence of the rice genome.</title>
        <authorList>
            <consortium name="International rice genome sequencing project (IRGSP)"/>
        </authorList>
    </citation>
    <scope>NUCLEOTIDE SEQUENCE [LARGE SCALE GENOMIC DNA]</scope>
    <source>
        <strain>cv. Nipponbare</strain>
    </source>
</reference>
<reference key="4">
    <citation type="journal article" date="2008" name="Nucleic Acids Res.">
        <title>The rice annotation project database (RAP-DB): 2008 update.</title>
        <authorList>
            <consortium name="The rice annotation project (RAP)"/>
        </authorList>
    </citation>
    <scope>GENOME REANNOTATION</scope>
    <source>
        <strain>cv. Nipponbare</strain>
    </source>
</reference>
<reference key="5">
    <citation type="journal article" date="2013" name="Rice">
        <title>Improvement of the Oryza sativa Nipponbare reference genome using next generation sequence and optical map data.</title>
        <authorList>
            <person name="Kawahara Y."/>
            <person name="de la Bastide M."/>
            <person name="Hamilton J.P."/>
            <person name="Kanamori H."/>
            <person name="McCombie W.R."/>
            <person name="Ouyang S."/>
            <person name="Schwartz D.C."/>
            <person name="Tanaka T."/>
            <person name="Wu J."/>
            <person name="Zhou S."/>
            <person name="Childs K.L."/>
            <person name="Davidson R.M."/>
            <person name="Lin H."/>
            <person name="Quesada-Ocampo L."/>
            <person name="Vaillancourt B."/>
            <person name="Sakai H."/>
            <person name="Lee S.S."/>
            <person name="Kim J."/>
            <person name="Numa H."/>
            <person name="Itoh T."/>
            <person name="Buell C.R."/>
            <person name="Matsumoto T."/>
        </authorList>
    </citation>
    <scope>GENOME REANNOTATION</scope>
    <source>
        <strain>cv. Nipponbare</strain>
    </source>
</reference>
<name>CRSH3_ORYSJ</name>
<keyword id="KW-0067">ATP-binding</keyword>
<keyword id="KW-0106">Calcium</keyword>
<keyword id="KW-0150">Chloroplast</keyword>
<keyword id="KW-0342">GTP-binding</keyword>
<keyword id="KW-0418">Kinase</keyword>
<keyword id="KW-0479">Metal-binding</keyword>
<keyword id="KW-0547">Nucleotide-binding</keyword>
<keyword id="KW-0934">Plastid</keyword>
<keyword id="KW-1185">Reference proteome</keyword>
<keyword id="KW-0677">Repeat</keyword>
<keyword id="KW-0346">Stress response</keyword>
<keyword id="KW-0808">Transferase</keyword>
<keyword id="KW-0809">Transit peptide</keyword>